<feature type="chain" id="PRO_1000205454" description="Large ribosomal subunit protein uL10">
    <location>
        <begin position="1"/>
        <end position="167"/>
    </location>
</feature>
<comment type="function">
    <text evidence="1">Forms part of the ribosomal stalk, playing a central role in the interaction of the ribosome with GTP-bound translation factors.</text>
</comment>
<comment type="subunit">
    <text evidence="1">Part of the ribosomal stalk of the 50S ribosomal subunit. The N-terminus interacts with L11 and the large rRNA to form the base of the stalk. The C-terminus forms an elongated spine to which L12 dimers bind in a sequential fashion forming a multimeric L10(L12)X complex.</text>
</comment>
<comment type="similarity">
    <text evidence="1">Belongs to the universal ribosomal protein uL10 family.</text>
</comment>
<sequence>MALGLEDKKAIVAEVSEAAKGALSAVAADSRGVTVAKMTALRQSAREAGVYMRVVRNTLLTRAVEGSDFECMKDVFVGPTLIAFSNEHPGAAARLFKEFAKGNDKFSIKGGAFQGEFIPAAQIDRLATLPTYEEAIAKLMATMKEASAGKLVRTLAALRDKKEAEAA</sequence>
<gene>
    <name evidence="1" type="primary">rplJ</name>
    <name type="ordered locus">Tola_2785</name>
</gene>
<accession>C4LBV4</accession>
<evidence type="ECO:0000255" key="1">
    <source>
        <dbReference type="HAMAP-Rule" id="MF_00362"/>
    </source>
</evidence>
<evidence type="ECO:0000305" key="2"/>
<protein>
    <recommendedName>
        <fullName evidence="1">Large ribosomal subunit protein uL10</fullName>
    </recommendedName>
    <alternativeName>
        <fullName evidence="2">50S ribosomal protein L10</fullName>
    </alternativeName>
</protein>
<name>RL10_TOLAT</name>
<keyword id="KW-1185">Reference proteome</keyword>
<keyword id="KW-0687">Ribonucleoprotein</keyword>
<keyword id="KW-0689">Ribosomal protein</keyword>
<keyword id="KW-0694">RNA-binding</keyword>
<keyword id="KW-0699">rRNA-binding</keyword>
<proteinExistence type="inferred from homology"/>
<reference key="1">
    <citation type="submission" date="2009-05" db="EMBL/GenBank/DDBJ databases">
        <title>Complete sequence of Tolumonas auensis DSM 9187.</title>
        <authorList>
            <consortium name="US DOE Joint Genome Institute"/>
            <person name="Lucas S."/>
            <person name="Copeland A."/>
            <person name="Lapidus A."/>
            <person name="Glavina del Rio T."/>
            <person name="Tice H."/>
            <person name="Bruce D."/>
            <person name="Goodwin L."/>
            <person name="Pitluck S."/>
            <person name="Chertkov O."/>
            <person name="Brettin T."/>
            <person name="Detter J.C."/>
            <person name="Han C."/>
            <person name="Larimer F."/>
            <person name="Land M."/>
            <person name="Hauser L."/>
            <person name="Kyrpides N."/>
            <person name="Mikhailova N."/>
            <person name="Spring S."/>
            <person name="Beller H."/>
        </authorList>
    </citation>
    <scope>NUCLEOTIDE SEQUENCE [LARGE SCALE GENOMIC DNA]</scope>
    <source>
        <strain>DSM 9187 / NBRC 110442 / TA 4</strain>
    </source>
</reference>
<organism>
    <name type="scientific">Tolumonas auensis (strain DSM 9187 / NBRC 110442 / TA 4)</name>
    <dbReference type="NCBI Taxonomy" id="595494"/>
    <lineage>
        <taxon>Bacteria</taxon>
        <taxon>Pseudomonadati</taxon>
        <taxon>Pseudomonadota</taxon>
        <taxon>Gammaproteobacteria</taxon>
        <taxon>Aeromonadales</taxon>
        <taxon>Aeromonadaceae</taxon>
        <taxon>Tolumonas</taxon>
    </lineage>
</organism>
<dbReference type="EMBL" id="CP001616">
    <property type="protein sequence ID" value="ACQ94378.1"/>
    <property type="molecule type" value="Genomic_DNA"/>
</dbReference>
<dbReference type="RefSeq" id="WP_015879827.1">
    <property type="nucleotide sequence ID" value="NC_012691.1"/>
</dbReference>
<dbReference type="STRING" id="595494.Tola_2785"/>
<dbReference type="KEGG" id="tau:Tola_2785"/>
<dbReference type="eggNOG" id="COG0244">
    <property type="taxonomic scope" value="Bacteria"/>
</dbReference>
<dbReference type="HOGENOM" id="CLU_092227_0_2_6"/>
<dbReference type="OrthoDB" id="9808307at2"/>
<dbReference type="Proteomes" id="UP000009073">
    <property type="component" value="Chromosome"/>
</dbReference>
<dbReference type="GO" id="GO:0015934">
    <property type="term" value="C:large ribosomal subunit"/>
    <property type="evidence" value="ECO:0007669"/>
    <property type="project" value="InterPro"/>
</dbReference>
<dbReference type="GO" id="GO:0070180">
    <property type="term" value="F:large ribosomal subunit rRNA binding"/>
    <property type="evidence" value="ECO:0007669"/>
    <property type="project" value="UniProtKB-UniRule"/>
</dbReference>
<dbReference type="GO" id="GO:0003735">
    <property type="term" value="F:structural constituent of ribosome"/>
    <property type="evidence" value="ECO:0007669"/>
    <property type="project" value="InterPro"/>
</dbReference>
<dbReference type="GO" id="GO:0006412">
    <property type="term" value="P:translation"/>
    <property type="evidence" value="ECO:0007669"/>
    <property type="project" value="UniProtKB-UniRule"/>
</dbReference>
<dbReference type="CDD" id="cd05797">
    <property type="entry name" value="Ribosomal_L10"/>
    <property type="match status" value="1"/>
</dbReference>
<dbReference type="FunFam" id="3.30.70.1730:FF:000001">
    <property type="entry name" value="50S ribosomal protein L10"/>
    <property type="match status" value="1"/>
</dbReference>
<dbReference type="Gene3D" id="3.30.70.1730">
    <property type="match status" value="1"/>
</dbReference>
<dbReference type="Gene3D" id="6.10.250.2350">
    <property type="match status" value="1"/>
</dbReference>
<dbReference type="HAMAP" id="MF_00362">
    <property type="entry name" value="Ribosomal_uL10"/>
    <property type="match status" value="1"/>
</dbReference>
<dbReference type="InterPro" id="IPR001790">
    <property type="entry name" value="Ribosomal_uL10"/>
</dbReference>
<dbReference type="InterPro" id="IPR043141">
    <property type="entry name" value="Ribosomal_uL10-like_sf"/>
</dbReference>
<dbReference type="InterPro" id="IPR022973">
    <property type="entry name" value="Ribosomal_uL10_bac"/>
</dbReference>
<dbReference type="InterPro" id="IPR047865">
    <property type="entry name" value="Ribosomal_uL10_bac_type"/>
</dbReference>
<dbReference type="InterPro" id="IPR002363">
    <property type="entry name" value="Ribosomal_uL10_CS_bac"/>
</dbReference>
<dbReference type="NCBIfam" id="NF000955">
    <property type="entry name" value="PRK00099.1-1"/>
    <property type="match status" value="1"/>
</dbReference>
<dbReference type="PANTHER" id="PTHR11560">
    <property type="entry name" value="39S RIBOSOMAL PROTEIN L10, MITOCHONDRIAL"/>
    <property type="match status" value="1"/>
</dbReference>
<dbReference type="Pfam" id="PF00466">
    <property type="entry name" value="Ribosomal_L10"/>
    <property type="match status" value="1"/>
</dbReference>
<dbReference type="SUPFAM" id="SSF160369">
    <property type="entry name" value="Ribosomal protein L10-like"/>
    <property type="match status" value="1"/>
</dbReference>
<dbReference type="PROSITE" id="PS01109">
    <property type="entry name" value="RIBOSOMAL_L10"/>
    <property type="match status" value="1"/>
</dbReference>